<sequence length="821" mass="93243">MVDKDANNELDSIPLVSEQVTNGENGELNIKASESTVGSNGAVADHEESETNNQTAVDNTENDTLDKDKLDAQPNHNEQQREADLSDAFSVKIQDESVNDKTSEPDENKDTASRKSMDGILNLSENNLDATKPEASEQELNPSLHNLMSACQQGDLTKVSELISNGEVKANDTFSDGITALHWAAINNRLTIVKYLIENDHSKADPNLLGGELKASPLHWACRNGLVYIVDYFIVHTDADPTLRDSQSYNALHLAVHSSNITLIIYLLLSCCGSTSTSKQLYVDESDNCDRTSLHWAAYQGDLLTINALLKFGADVSKIDKNLFIPLHWAFMKGYKTVLKVLAGAGSNIFAKNDQGKDSFEVAKDMNCYDTWIKVLKECGRNPKNHWEMKTIYLNPKIGKLVTFFTPYIILPIMFQVCSFYNGFVIPKLFFSVVLFAGSIYILQKLVIPTYLAEEKAIPKSPLLAGIFSGTAFWCIVTWAFNIIPTLLFKKFISNLVLSAFIYLFVWSFFKAMFINPGYVPVPSDNSVTLDQVKDLIKIGRFDTDNFCVNTFVRKPLRSKYSRFNKKLIARFDHYCPWVYNDIGVRNHKLFVVFVYSLNLAVLLFTHLSIKLFKNTEKMSGYDSDDESQKCWLLSDELCVGYKSHHFQFNLMLWCLIQYIWIAFLCLVQTFQILKGLTTWEFSSLNNRLQTHNGYNHSTLPKDFDLTSSNTNRYNSPKQSNGLSICLKLIGLDQVVLAIKLGIKSIFSHTSSVETYDPLNEFEIPTDYGFRTNWLDFWFIGDIEWRNIFYLPIEGENNLNRTVVDYYKLYEYPPKLADVDA</sequence>
<proteinExistence type="inferred from homology"/>
<gene>
    <name type="primary">AKR1</name>
    <name type="ordered locus">DEHA2E15796g</name>
</gene>
<dbReference type="EC" id="2.3.1.225"/>
<dbReference type="EMBL" id="CR382137">
    <property type="protein sequence ID" value="CAG88243.2"/>
    <property type="molecule type" value="Genomic_DNA"/>
</dbReference>
<dbReference type="RefSeq" id="XP_459990.2">
    <property type="nucleotide sequence ID" value="XM_459990.1"/>
</dbReference>
<dbReference type="SMR" id="Q6BP80"/>
<dbReference type="FunCoup" id="Q6BP80">
    <property type="interactions" value="652"/>
</dbReference>
<dbReference type="STRING" id="284592.Q6BP80"/>
<dbReference type="GeneID" id="2902136"/>
<dbReference type="KEGG" id="dha:DEHA2E15796g"/>
<dbReference type="VEuPathDB" id="FungiDB:DEHA2E15796g"/>
<dbReference type="eggNOG" id="KOG0509">
    <property type="taxonomic scope" value="Eukaryota"/>
</dbReference>
<dbReference type="HOGENOM" id="CLU_012510_1_1_1"/>
<dbReference type="InParanoid" id="Q6BP80"/>
<dbReference type="OMA" id="GITHILH"/>
<dbReference type="OrthoDB" id="6781668at2759"/>
<dbReference type="Proteomes" id="UP000000599">
    <property type="component" value="Chromosome E"/>
</dbReference>
<dbReference type="GO" id="GO:0031901">
    <property type="term" value="C:early endosome membrane"/>
    <property type="evidence" value="ECO:0007669"/>
    <property type="project" value="UniProtKB-SubCell"/>
</dbReference>
<dbReference type="GO" id="GO:0000139">
    <property type="term" value="C:Golgi membrane"/>
    <property type="evidence" value="ECO:0007669"/>
    <property type="project" value="UniProtKB-SubCell"/>
</dbReference>
<dbReference type="GO" id="GO:0019706">
    <property type="term" value="F:protein-cysteine S-palmitoyltransferase activity"/>
    <property type="evidence" value="ECO:0007669"/>
    <property type="project" value="UniProtKB-EC"/>
</dbReference>
<dbReference type="Gene3D" id="1.25.40.20">
    <property type="entry name" value="Ankyrin repeat-containing domain"/>
    <property type="match status" value="1"/>
</dbReference>
<dbReference type="InterPro" id="IPR002110">
    <property type="entry name" value="Ankyrin_rpt"/>
</dbReference>
<dbReference type="InterPro" id="IPR036770">
    <property type="entry name" value="Ankyrin_rpt-contain_sf"/>
</dbReference>
<dbReference type="InterPro" id="IPR001594">
    <property type="entry name" value="Palmitoyltrfase_DHHC"/>
</dbReference>
<dbReference type="PANTHER" id="PTHR24161">
    <property type="entry name" value="ANK_REP_REGION DOMAIN-CONTAINING PROTEIN-RELATED"/>
    <property type="match status" value="1"/>
</dbReference>
<dbReference type="PANTHER" id="PTHR24161:SF85">
    <property type="entry name" value="PALMITOYLTRANSFERASE HIP14"/>
    <property type="match status" value="1"/>
</dbReference>
<dbReference type="Pfam" id="PF12796">
    <property type="entry name" value="Ank_2"/>
    <property type="match status" value="2"/>
</dbReference>
<dbReference type="Pfam" id="PF01529">
    <property type="entry name" value="DHHC"/>
    <property type="match status" value="1"/>
</dbReference>
<dbReference type="SMART" id="SM00248">
    <property type="entry name" value="ANK"/>
    <property type="match status" value="6"/>
</dbReference>
<dbReference type="SUPFAM" id="SSF48403">
    <property type="entry name" value="Ankyrin repeat"/>
    <property type="match status" value="1"/>
</dbReference>
<dbReference type="PROSITE" id="PS50297">
    <property type="entry name" value="ANK_REP_REGION"/>
    <property type="match status" value="1"/>
</dbReference>
<dbReference type="PROSITE" id="PS50088">
    <property type="entry name" value="ANK_REPEAT"/>
    <property type="match status" value="3"/>
</dbReference>
<dbReference type="PROSITE" id="PS50216">
    <property type="entry name" value="DHHC"/>
    <property type="match status" value="1"/>
</dbReference>
<protein>
    <recommendedName>
        <fullName>Palmitoyltransferase AKR1</fullName>
        <ecNumber>2.3.1.225</ecNumber>
    </recommendedName>
    <alternativeName>
        <fullName>Ankyrin repeat-containing protein AKR1</fullName>
    </alternativeName>
</protein>
<evidence type="ECO:0000250" key="1"/>
<evidence type="ECO:0000255" key="2"/>
<evidence type="ECO:0000255" key="3">
    <source>
        <dbReference type="PROSITE-ProRule" id="PRU00067"/>
    </source>
</evidence>
<evidence type="ECO:0000256" key="4">
    <source>
        <dbReference type="SAM" id="MobiDB-lite"/>
    </source>
</evidence>
<evidence type="ECO:0000305" key="5"/>
<name>AKR1_DEBHA</name>
<organism>
    <name type="scientific">Debaryomyces hansenii (strain ATCC 36239 / CBS 767 / BCRC 21394 / JCM 1990 / NBRC 0083 / IGC 2968)</name>
    <name type="common">Yeast</name>
    <name type="synonym">Torulaspora hansenii</name>
    <dbReference type="NCBI Taxonomy" id="284592"/>
    <lineage>
        <taxon>Eukaryota</taxon>
        <taxon>Fungi</taxon>
        <taxon>Dikarya</taxon>
        <taxon>Ascomycota</taxon>
        <taxon>Saccharomycotina</taxon>
        <taxon>Pichiomycetes</taxon>
        <taxon>Debaryomycetaceae</taxon>
        <taxon>Debaryomyces</taxon>
    </lineage>
</organism>
<accession>Q6BP80</accession>
<feature type="chain" id="PRO_0000212922" description="Palmitoyltransferase AKR1">
    <location>
        <begin position="1"/>
        <end position="821"/>
    </location>
</feature>
<feature type="topological domain" description="Cytoplasmic" evidence="2">
    <location>
        <begin position="1"/>
        <end position="400"/>
    </location>
</feature>
<feature type="transmembrane region" description="Helical" evidence="2">
    <location>
        <begin position="401"/>
        <end position="421"/>
    </location>
</feature>
<feature type="topological domain" description="Lumenal" evidence="2">
    <location>
        <position position="422"/>
    </location>
</feature>
<feature type="transmembrane region" description="Helical" evidence="2">
    <location>
        <begin position="423"/>
        <end position="443"/>
    </location>
</feature>
<feature type="topological domain" description="Cytoplasmic" evidence="2">
    <location>
        <begin position="444"/>
        <end position="463"/>
    </location>
</feature>
<feature type="transmembrane region" description="Helical" evidence="2">
    <location>
        <begin position="464"/>
        <end position="484"/>
    </location>
</feature>
<feature type="topological domain" description="Lumenal" evidence="2">
    <location>
        <begin position="485"/>
        <end position="494"/>
    </location>
</feature>
<feature type="transmembrane region" description="Helical" evidence="2">
    <location>
        <begin position="495"/>
        <end position="515"/>
    </location>
</feature>
<feature type="topological domain" description="Cytoplasmic" evidence="2">
    <location>
        <begin position="516"/>
        <end position="589"/>
    </location>
</feature>
<feature type="transmembrane region" description="Helical" evidence="2">
    <location>
        <begin position="590"/>
        <end position="610"/>
    </location>
</feature>
<feature type="topological domain" description="Lumenal" evidence="2">
    <location>
        <begin position="611"/>
        <end position="650"/>
    </location>
</feature>
<feature type="transmembrane region" description="Helical" evidence="2">
    <location>
        <begin position="651"/>
        <end position="671"/>
    </location>
</feature>
<feature type="topological domain" description="Cytoplasmic" evidence="2">
    <location>
        <begin position="672"/>
        <end position="821"/>
    </location>
</feature>
<feature type="repeat" description="ANK 1">
    <location>
        <begin position="142"/>
        <end position="172"/>
    </location>
</feature>
<feature type="repeat" description="ANK 2">
    <location>
        <begin position="176"/>
        <end position="205"/>
    </location>
</feature>
<feature type="repeat" description="ANK 3">
    <location>
        <begin position="213"/>
        <end position="243"/>
    </location>
</feature>
<feature type="repeat" description="ANK 4">
    <location>
        <begin position="247"/>
        <end position="277"/>
    </location>
</feature>
<feature type="repeat" description="ANK 5">
    <location>
        <begin position="289"/>
        <end position="318"/>
    </location>
</feature>
<feature type="repeat" description="ANK 6">
    <location>
        <begin position="322"/>
        <end position="351"/>
    </location>
</feature>
<feature type="domain" description="DHHC" evidence="3">
    <location>
        <begin position="546"/>
        <end position="596"/>
    </location>
</feature>
<feature type="region of interest" description="Disordered" evidence="4">
    <location>
        <begin position="1"/>
        <end position="118"/>
    </location>
</feature>
<feature type="compositionally biased region" description="Basic and acidic residues" evidence="4">
    <location>
        <begin position="93"/>
        <end position="117"/>
    </location>
</feature>
<feature type="active site" description="S-palmitoyl cysteine intermediate" evidence="1">
    <location>
        <position position="576"/>
    </location>
</feature>
<keyword id="KW-0012">Acyltransferase</keyword>
<keyword id="KW-0040">ANK repeat</keyword>
<keyword id="KW-0967">Endosome</keyword>
<keyword id="KW-0333">Golgi apparatus</keyword>
<keyword id="KW-0449">Lipoprotein</keyword>
<keyword id="KW-0472">Membrane</keyword>
<keyword id="KW-0564">Palmitate</keyword>
<keyword id="KW-1185">Reference proteome</keyword>
<keyword id="KW-0677">Repeat</keyword>
<keyword id="KW-0808">Transferase</keyword>
<keyword id="KW-0812">Transmembrane</keyword>
<keyword id="KW-1133">Transmembrane helix</keyword>
<comment type="function">
    <text evidence="1">Palmitoyltransferase specific for casein kinase 1.</text>
</comment>
<comment type="catalytic activity">
    <reaction>
        <text>L-cysteinyl-[protein] + hexadecanoyl-CoA = S-hexadecanoyl-L-cysteinyl-[protein] + CoA</text>
        <dbReference type="Rhea" id="RHEA:36683"/>
        <dbReference type="Rhea" id="RHEA-COMP:10131"/>
        <dbReference type="Rhea" id="RHEA-COMP:11032"/>
        <dbReference type="ChEBI" id="CHEBI:29950"/>
        <dbReference type="ChEBI" id="CHEBI:57287"/>
        <dbReference type="ChEBI" id="CHEBI:57379"/>
        <dbReference type="ChEBI" id="CHEBI:74151"/>
        <dbReference type="EC" id="2.3.1.225"/>
    </reaction>
</comment>
<comment type="subcellular location">
    <subcellularLocation>
        <location>Early endosome membrane</location>
        <topology>Multi-pass membrane protein</topology>
    </subcellularLocation>
    <subcellularLocation>
        <location evidence="1">Golgi apparatus membrane</location>
        <topology evidence="1">Multi-pass membrane protein</topology>
    </subcellularLocation>
</comment>
<comment type="domain">
    <text evidence="1">The DHHC domain is required for palmitoyltransferase activity.</text>
</comment>
<comment type="similarity">
    <text evidence="5">Belongs to the DHHC palmitoyltransferase family. AKR/ZDHHC17 subfamily.</text>
</comment>
<reference key="1">
    <citation type="journal article" date="2004" name="Nature">
        <title>Genome evolution in yeasts.</title>
        <authorList>
            <person name="Dujon B."/>
            <person name="Sherman D."/>
            <person name="Fischer G."/>
            <person name="Durrens P."/>
            <person name="Casaregola S."/>
            <person name="Lafontaine I."/>
            <person name="de Montigny J."/>
            <person name="Marck C."/>
            <person name="Neuveglise C."/>
            <person name="Talla E."/>
            <person name="Goffard N."/>
            <person name="Frangeul L."/>
            <person name="Aigle M."/>
            <person name="Anthouard V."/>
            <person name="Babour A."/>
            <person name="Barbe V."/>
            <person name="Barnay S."/>
            <person name="Blanchin S."/>
            <person name="Beckerich J.-M."/>
            <person name="Beyne E."/>
            <person name="Bleykasten C."/>
            <person name="Boisrame A."/>
            <person name="Boyer J."/>
            <person name="Cattolico L."/>
            <person name="Confanioleri F."/>
            <person name="de Daruvar A."/>
            <person name="Despons L."/>
            <person name="Fabre E."/>
            <person name="Fairhead C."/>
            <person name="Ferry-Dumazet H."/>
            <person name="Groppi A."/>
            <person name="Hantraye F."/>
            <person name="Hennequin C."/>
            <person name="Jauniaux N."/>
            <person name="Joyet P."/>
            <person name="Kachouri R."/>
            <person name="Kerrest A."/>
            <person name="Koszul R."/>
            <person name="Lemaire M."/>
            <person name="Lesur I."/>
            <person name="Ma L."/>
            <person name="Muller H."/>
            <person name="Nicaud J.-M."/>
            <person name="Nikolski M."/>
            <person name="Oztas S."/>
            <person name="Ozier-Kalogeropoulos O."/>
            <person name="Pellenz S."/>
            <person name="Potier S."/>
            <person name="Richard G.-F."/>
            <person name="Straub M.-L."/>
            <person name="Suleau A."/>
            <person name="Swennen D."/>
            <person name="Tekaia F."/>
            <person name="Wesolowski-Louvel M."/>
            <person name="Westhof E."/>
            <person name="Wirth B."/>
            <person name="Zeniou-Meyer M."/>
            <person name="Zivanovic Y."/>
            <person name="Bolotin-Fukuhara M."/>
            <person name="Thierry A."/>
            <person name="Bouchier C."/>
            <person name="Caudron B."/>
            <person name="Scarpelli C."/>
            <person name="Gaillardin C."/>
            <person name="Weissenbach J."/>
            <person name="Wincker P."/>
            <person name="Souciet J.-L."/>
        </authorList>
    </citation>
    <scope>NUCLEOTIDE SEQUENCE [LARGE SCALE GENOMIC DNA]</scope>
    <source>
        <strain>ATCC 36239 / CBS 767 / BCRC 21394 / JCM 1990 / NBRC 0083 / IGC 2968</strain>
    </source>
</reference>